<dbReference type="EC" id="2.7.7.60" evidence="1"/>
<dbReference type="EMBL" id="CP000606">
    <property type="protein sequence ID" value="ABO23077.1"/>
    <property type="molecule type" value="Genomic_DNA"/>
</dbReference>
<dbReference type="RefSeq" id="WP_011865009.1">
    <property type="nucleotide sequence ID" value="NC_009092.1"/>
</dbReference>
<dbReference type="SMR" id="A3QC79"/>
<dbReference type="STRING" id="323850.Shew_1207"/>
<dbReference type="KEGG" id="slo:Shew_1207"/>
<dbReference type="eggNOG" id="COG1211">
    <property type="taxonomic scope" value="Bacteria"/>
</dbReference>
<dbReference type="HOGENOM" id="CLU_061281_3_1_6"/>
<dbReference type="OrthoDB" id="9806837at2"/>
<dbReference type="UniPathway" id="UPA00056">
    <property type="reaction ID" value="UER00093"/>
</dbReference>
<dbReference type="Proteomes" id="UP000001558">
    <property type="component" value="Chromosome"/>
</dbReference>
<dbReference type="GO" id="GO:0050518">
    <property type="term" value="F:2-C-methyl-D-erythritol 4-phosphate cytidylyltransferase activity"/>
    <property type="evidence" value="ECO:0007669"/>
    <property type="project" value="UniProtKB-UniRule"/>
</dbReference>
<dbReference type="GO" id="GO:0019288">
    <property type="term" value="P:isopentenyl diphosphate biosynthetic process, methylerythritol 4-phosphate pathway"/>
    <property type="evidence" value="ECO:0007669"/>
    <property type="project" value="UniProtKB-UniRule"/>
</dbReference>
<dbReference type="CDD" id="cd02516">
    <property type="entry name" value="CDP-ME_synthetase"/>
    <property type="match status" value="1"/>
</dbReference>
<dbReference type="FunFam" id="3.90.550.10:FF:000003">
    <property type="entry name" value="2-C-methyl-D-erythritol 4-phosphate cytidylyltransferase"/>
    <property type="match status" value="1"/>
</dbReference>
<dbReference type="Gene3D" id="3.90.550.10">
    <property type="entry name" value="Spore Coat Polysaccharide Biosynthesis Protein SpsA, Chain A"/>
    <property type="match status" value="1"/>
</dbReference>
<dbReference type="HAMAP" id="MF_00108">
    <property type="entry name" value="IspD"/>
    <property type="match status" value="1"/>
</dbReference>
<dbReference type="InterPro" id="IPR001228">
    <property type="entry name" value="IspD"/>
</dbReference>
<dbReference type="InterPro" id="IPR034683">
    <property type="entry name" value="IspD/TarI"/>
</dbReference>
<dbReference type="InterPro" id="IPR050088">
    <property type="entry name" value="IspD/TarI_cytidylyltransf_bact"/>
</dbReference>
<dbReference type="InterPro" id="IPR029044">
    <property type="entry name" value="Nucleotide-diphossugar_trans"/>
</dbReference>
<dbReference type="NCBIfam" id="TIGR00453">
    <property type="entry name" value="ispD"/>
    <property type="match status" value="1"/>
</dbReference>
<dbReference type="PANTHER" id="PTHR32125">
    <property type="entry name" value="2-C-METHYL-D-ERYTHRITOL 4-PHOSPHATE CYTIDYLYLTRANSFERASE, CHLOROPLASTIC"/>
    <property type="match status" value="1"/>
</dbReference>
<dbReference type="PANTHER" id="PTHR32125:SF4">
    <property type="entry name" value="2-C-METHYL-D-ERYTHRITOL 4-PHOSPHATE CYTIDYLYLTRANSFERASE, CHLOROPLASTIC"/>
    <property type="match status" value="1"/>
</dbReference>
<dbReference type="Pfam" id="PF01128">
    <property type="entry name" value="IspD"/>
    <property type="match status" value="1"/>
</dbReference>
<dbReference type="SUPFAM" id="SSF53448">
    <property type="entry name" value="Nucleotide-diphospho-sugar transferases"/>
    <property type="match status" value="1"/>
</dbReference>
<reference key="1">
    <citation type="submission" date="2007-03" db="EMBL/GenBank/DDBJ databases">
        <title>Complete sequence of Shewanella loihica PV-4.</title>
        <authorList>
            <consortium name="US DOE Joint Genome Institute"/>
            <person name="Copeland A."/>
            <person name="Lucas S."/>
            <person name="Lapidus A."/>
            <person name="Barry K."/>
            <person name="Detter J.C."/>
            <person name="Glavina del Rio T."/>
            <person name="Hammon N."/>
            <person name="Israni S."/>
            <person name="Dalin E."/>
            <person name="Tice H."/>
            <person name="Pitluck S."/>
            <person name="Chain P."/>
            <person name="Malfatti S."/>
            <person name="Shin M."/>
            <person name="Vergez L."/>
            <person name="Schmutz J."/>
            <person name="Larimer F."/>
            <person name="Land M."/>
            <person name="Hauser L."/>
            <person name="Kyrpides N."/>
            <person name="Mikhailova N."/>
            <person name="Romine M.F."/>
            <person name="Serres G."/>
            <person name="Fredrickson J."/>
            <person name="Tiedje J."/>
            <person name="Richardson P."/>
        </authorList>
    </citation>
    <scope>NUCLEOTIDE SEQUENCE [LARGE SCALE GENOMIC DNA]</scope>
    <source>
        <strain>ATCC BAA-1088 / PV-4</strain>
    </source>
</reference>
<sequence length="242" mass="25909">MISRIQELVAIVPAAGIGARMGAEIPKQYLMLNHQPILAHTLDRLLEHPRIDKVIIALSPEDSHFAKLSQASHPKLMTVIGGKERADSVLSALKVASQSAWALVHDAARPCLSAADIDKLIAACETEEGHQQGAILAMPVRDTMKRSGKGGAIQETVCRENLWHALTPQLFPVISLKQNLADALAAQVAITDEASAMEWAGGQPLLVSGRFDNIKVTHPEDLQLAALYLQAAASDPNSSTGE</sequence>
<accession>A3QC79</accession>
<evidence type="ECO:0000255" key="1">
    <source>
        <dbReference type="HAMAP-Rule" id="MF_00108"/>
    </source>
</evidence>
<protein>
    <recommendedName>
        <fullName evidence="1">2-C-methyl-D-erythritol 4-phosphate cytidylyltransferase</fullName>
        <ecNumber evidence="1">2.7.7.60</ecNumber>
    </recommendedName>
    <alternativeName>
        <fullName evidence="1">4-diphosphocytidyl-2C-methyl-D-erythritol synthase</fullName>
    </alternativeName>
    <alternativeName>
        <fullName evidence="1">MEP cytidylyltransferase</fullName>
        <shortName evidence="1">MCT</shortName>
    </alternativeName>
</protein>
<comment type="function">
    <text evidence="1">Catalyzes the formation of 4-diphosphocytidyl-2-C-methyl-D-erythritol from CTP and 2-C-methyl-D-erythritol 4-phosphate (MEP).</text>
</comment>
<comment type="catalytic activity">
    <reaction evidence="1">
        <text>2-C-methyl-D-erythritol 4-phosphate + CTP + H(+) = 4-CDP-2-C-methyl-D-erythritol + diphosphate</text>
        <dbReference type="Rhea" id="RHEA:13429"/>
        <dbReference type="ChEBI" id="CHEBI:15378"/>
        <dbReference type="ChEBI" id="CHEBI:33019"/>
        <dbReference type="ChEBI" id="CHEBI:37563"/>
        <dbReference type="ChEBI" id="CHEBI:57823"/>
        <dbReference type="ChEBI" id="CHEBI:58262"/>
        <dbReference type="EC" id="2.7.7.60"/>
    </reaction>
</comment>
<comment type="pathway">
    <text evidence="1">Isoprenoid biosynthesis; isopentenyl diphosphate biosynthesis via DXP pathway; isopentenyl diphosphate from 1-deoxy-D-xylulose 5-phosphate: step 2/6.</text>
</comment>
<comment type="similarity">
    <text evidence="1">Belongs to the IspD/TarI cytidylyltransferase family. IspD subfamily.</text>
</comment>
<proteinExistence type="inferred from homology"/>
<keyword id="KW-0414">Isoprene biosynthesis</keyword>
<keyword id="KW-0548">Nucleotidyltransferase</keyword>
<keyword id="KW-1185">Reference proteome</keyword>
<keyword id="KW-0808">Transferase</keyword>
<name>ISPD_SHELP</name>
<gene>
    <name evidence="1" type="primary">ispD</name>
    <name type="ordered locus">Shew_1207</name>
</gene>
<organism>
    <name type="scientific">Shewanella loihica (strain ATCC BAA-1088 / PV-4)</name>
    <dbReference type="NCBI Taxonomy" id="323850"/>
    <lineage>
        <taxon>Bacteria</taxon>
        <taxon>Pseudomonadati</taxon>
        <taxon>Pseudomonadota</taxon>
        <taxon>Gammaproteobacteria</taxon>
        <taxon>Alteromonadales</taxon>
        <taxon>Shewanellaceae</taxon>
        <taxon>Shewanella</taxon>
    </lineage>
</organism>
<feature type="chain" id="PRO_1000071322" description="2-C-methyl-D-erythritol 4-phosphate cytidylyltransferase">
    <location>
        <begin position="1"/>
        <end position="242"/>
    </location>
</feature>
<feature type="site" description="Transition state stabilizer" evidence="1">
    <location>
        <position position="20"/>
    </location>
</feature>
<feature type="site" description="Transition state stabilizer" evidence="1">
    <location>
        <position position="27"/>
    </location>
</feature>
<feature type="site" description="Positions MEP for the nucleophilic attack" evidence="1">
    <location>
        <position position="159"/>
    </location>
</feature>
<feature type="site" description="Positions MEP for the nucleophilic attack" evidence="1">
    <location>
        <position position="215"/>
    </location>
</feature>